<reference key="1">
    <citation type="journal article" date="2004" name="Nature">
        <title>Genome sequence of the Brown Norway rat yields insights into mammalian evolution.</title>
        <authorList>
            <person name="Gibbs R.A."/>
            <person name="Weinstock G.M."/>
            <person name="Metzker M.L."/>
            <person name="Muzny D.M."/>
            <person name="Sodergren E.J."/>
            <person name="Scherer S."/>
            <person name="Scott G."/>
            <person name="Steffen D."/>
            <person name="Worley K.C."/>
            <person name="Burch P.E."/>
            <person name="Okwuonu G."/>
            <person name="Hines S."/>
            <person name="Lewis L."/>
            <person name="Deramo C."/>
            <person name="Delgado O."/>
            <person name="Dugan-Rocha S."/>
            <person name="Miner G."/>
            <person name="Morgan M."/>
            <person name="Hawes A."/>
            <person name="Gill R."/>
            <person name="Holt R.A."/>
            <person name="Adams M.D."/>
            <person name="Amanatides P.G."/>
            <person name="Baden-Tillson H."/>
            <person name="Barnstead M."/>
            <person name="Chin S."/>
            <person name="Evans C.A."/>
            <person name="Ferriera S."/>
            <person name="Fosler C."/>
            <person name="Glodek A."/>
            <person name="Gu Z."/>
            <person name="Jennings D."/>
            <person name="Kraft C.L."/>
            <person name="Nguyen T."/>
            <person name="Pfannkoch C.M."/>
            <person name="Sitter C."/>
            <person name="Sutton G.G."/>
            <person name="Venter J.C."/>
            <person name="Woodage T."/>
            <person name="Smith D."/>
            <person name="Lee H.-M."/>
            <person name="Gustafson E."/>
            <person name="Cahill P."/>
            <person name="Kana A."/>
            <person name="Doucette-Stamm L."/>
            <person name="Weinstock K."/>
            <person name="Fechtel K."/>
            <person name="Weiss R.B."/>
            <person name="Dunn D.M."/>
            <person name="Green E.D."/>
            <person name="Blakesley R.W."/>
            <person name="Bouffard G.G."/>
            <person name="De Jong P.J."/>
            <person name="Osoegawa K."/>
            <person name="Zhu B."/>
            <person name="Marra M."/>
            <person name="Schein J."/>
            <person name="Bosdet I."/>
            <person name="Fjell C."/>
            <person name="Jones S."/>
            <person name="Krzywinski M."/>
            <person name="Mathewson C."/>
            <person name="Siddiqui A."/>
            <person name="Wye N."/>
            <person name="McPherson J."/>
            <person name="Zhao S."/>
            <person name="Fraser C.M."/>
            <person name="Shetty J."/>
            <person name="Shatsman S."/>
            <person name="Geer K."/>
            <person name="Chen Y."/>
            <person name="Abramzon S."/>
            <person name="Nierman W.C."/>
            <person name="Havlak P.H."/>
            <person name="Chen R."/>
            <person name="Durbin K.J."/>
            <person name="Egan A."/>
            <person name="Ren Y."/>
            <person name="Song X.-Z."/>
            <person name="Li B."/>
            <person name="Liu Y."/>
            <person name="Qin X."/>
            <person name="Cawley S."/>
            <person name="Cooney A.J."/>
            <person name="D'Souza L.M."/>
            <person name="Martin K."/>
            <person name="Wu J.Q."/>
            <person name="Gonzalez-Garay M.L."/>
            <person name="Jackson A.R."/>
            <person name="Kalafus K.J."/>
            <person name="McLeod M.P."/>
            <person name="Milosavljevic A."/>
            <person name="Virk D."/>
            <person name="Volkov A."/>
            <person name="Wheeler D.A."/>
            <person name="Zhang Z."/>
            <person name="Bailey J.A."/>
            <person name="Eichler E.E."/>
            <person name="Tuzun E."/>
            <person name="Birney E."/>
            <person name="Mongin E."/>
            <person name="Ureta-Vidal A."/>
            <person name="Woodwark C."/>
            <person name="Zdobnov E."/>
            <person name="Bork P."/>
            <person name="Suyama M."/>
            <person name="Torrents D."/>
            <person name="Alexandersson M."/>
            <person name="Trask B.J."/>
            <person name="Young J.M."/>
            <person name="Huang H."/>
            <person name="Wang H."/>
            <person name="Xing H."/>
            <person name="Daniels S."/>
            <person name="Gietzen D."/>
            <person name="Schmidt J."/>
            <person name="Stevens K."/>
            <person name="Vitt U."/>
            <person name="Wingrove J."/>
            <person name="Camara F."/>
            <person name="Mar Alba M."/>
            <person name="Abril J.F."/>
            <person name="Guigo R."/>
            <person name="Smit A."/>
            <person name="Dubchak I."/>
            <person name="Rubin E.M."/>
            <person name="Couronne O."/>
            <person name="Poliakov A."/>
            <person name="Huebner N."/>
            <person name="Ganten D."/>
            <person name="Goesele C."/>
            <person name="Hummel O."/>
            <person name="Kreitler T."/>
            <person name="Lee Y.-A."/>
            <person name="Monti J."/>
            <person name="Schulz H."/>
            <person name="Zimdahl H."/>
            <person name="Himmelbauer H."/>
            <person name="Lehrach H."/>
            <person name="Jacob H.J."/>
            <person name="Bromberg S."/>
            <person name="Gullings-Handley J."/>
            <person name="Jensen-Seaman M.I."/>
            <person name="Kwitek A.E."/>
            <person name="Lazar J."/>
            <person name="Pasko D."/>
            <person name="Tonellato P.J."/>
            <person name="Twigger S."/>
            <person name="Ponting C.P."/>
            <person name="Duarte J.M."/>
            <person name="Rice S."/>
            <person name="Goodstadt L."/>
            <person name="Beatson S.A."/>
            <person name="Emes R.D."/>
            <person name="Winter E.E."/>
            <person name="Webber C."/>
            <person name="Brandt P."/>
            <person name="Nyakatura G."/>
            <person name="Adetobi M."/>
            <person name="Chiaromonte F."/>
            <person name="Elnitski L."/>
            <person name="Eswara P."/>
            <person name="Hardison R.C."/>
            <person name="Hou M."/>
            <person name="Kolbe D."/>
            <person name="Makova K."/>
            <person name="Miller W."/>
            <person name="Nekrutenko A."/>
            <person name="Riemer C."/>
            <person name="Schwartz S."/>
            <person name="Taylor J."/>
            <person name="Yang S."/>
            <person name="Zhang Y."/>
            <person name="Lindpaintner K."/>
            <person name="Andrews T.D."/>
            <person name="Caccamo M."/>
            <person name="Clamp M."/>
            <person name="Clarke L."/>
            <person name="Curwen V."/>
            <person name="Durbin R.M."/>
            <person name="Eyras E."/>
            <person name="Searle S.M."/>
            <person name="Cooper G.M."/>
            <person name="Batzoglou S."/>
            <person name="Brudno M."/>
            <person name="Sidow A."/>
            <person name="Stone E.A."/>
            <person name="Payseur B.A."/>
            <person name="Bourque G."/>
            <person name="Lopez-Otin C."/>
            <person name="Puente X.S."/>
            <person name="Chakrabarti K."/>
            <person name="Chatterji S."/>
            <person name="Dewey C."/>
            <person name="Pachter L."/>
            <person name="Bray N."/>
            <person name="Yap V.B."/>
            <person name="Caspi A."/>
            <person name="Tesler G."/>
            <person name="Pevzner P.A."/>
            <person name="Haussler D."/>
            <person name="Roskin K.M."/>
            <person name="Baertsch R."/>
            <person name="Clawson H."/>
            <person name="Furey T.S."/>
            <person name="Hinrichs A.S."/>
            <person name="Karolchik D."/>
            <person name="Kent W.J."/>
            <person name="Rosenbloom K.R."/>
            <person name="Trumbower H."/>
            <person name="Weirauch M."/>
            <person name="Cooper D.N."/>
            <person name="Stenson P.D."/>
            <person name="Ma B."/>
            <person name="Brent M."/>
            <person name="Arumugam M."/>
            <person name="Shteynberg D."/>
            <person name="Copley R.R."/>
            <person name="Taylor M.S."/>
            <person name="Riethman H."/>
            <person name="Mudunuri U."/>
            <person name="Peterson J."/>
            <person name="Guyer M."/>
            <person name="Felsenfeld A."/>
            <person name="Old S."/>
            <person name="Mockrin S."/>
            <person name="Collins F.S."/>
        </authorList>
    </citation>
    <scope>NUCLEOTIDE SEQUENCE [LARGE SCALE GENOMIC DNA]</scope>
    <source>
        <strain>Brown Norway</strain>
    </source>
</reference>
<reference key="2">
    <citation type="journal article" date="2004" name="Genome Res.">
        <title>The status, quality, and expansion of the NIH full-length cDNA project: the Mammalian Gene Collection (MGC).</title>
        <authorList>
            <consortium name="The MGC Project Team"/>
        </authorList>
    </citation>
    <scope>NUCLEOTIDE SEQUENCE [LARGE SCALE MRNA] OF 7-259 AND 160-589</scope>
    <source>
        <tissue>Liver</tissue>
    </source>
</reference>
<reference key="3">
    <citation type="journal article" date="1995" name="Genomics">
        <title>Molecular mapping of SSRs for Pgm1 and C8b in the vicinity of the rat fatty locus.</title>
        <authorList>
            <person name="Kershaw E.E."/>
            <person name="Chua S.C."/>
            <person name="Williams J.A."/>
            <person name="Murphy E.M."/>
            <person name="Leibel R.L."/>
        </authorList>
    </citation>
    <scope>NUCLEOTIDE SEQUENCE [MRNA] OF 450-589</scope>
    <source>
        <strain>Brown Norway/Crl</strain>
        <tissue>Liver</tissue>
    </source>
</reference>
<name>CO8B_RAT</name>
<protein>
    <recommendedName>
        <fullName>Complement component C8 beta chain</fullName>
    </recommendedName>
    <alternativeName>
        <fullName>Complement component 8 subunit beta</fullName>
    </alternativeName>
</protein>
<organism>
    <name type="scientific">Rattus norvegicus</name>
    <name type="common">Rat</name>
    <dbReference type="NCBI Taxonomy" id="10116"/>
    <lineage>
        <taxon>Eukaryota</taxon>
        <taxon>Metazoa</taxon>
        <taxon>Chordata</taxon>
        <taxon>Craniata</taxon>
        <taxon>Vertebrata</taxon>
        <taxon>Euteleostomi</taxon>
        <taxon>Mammalia</taxon>
        <taxon>Eutheria</taxon>
        <taxon>Euarchontoglires</taxon>
        <taxon>Glires</taxon>
        <taxon>Rodentia</taxon>
        <taxon>Myomorpha</taxon>
        <taxon>Muroidea</taxon>
        <taxon>Muridae</taxon>
        <taxon>Murinae</taxon>
        <taxon>Rattus</taxon>
    </lineage>
</organism>
<feature type="signal peptide" evidence="2">
    <location>
        <begin position="1"/>
        <end position="31"/>
    </location>
</feature>
<feature type="propeptide" id="PRO_0000291305" evidence="1">
    <location>
        <begin position="32"/>
        <end position="53"/>
    </location>
</feature>
<feature type="chain" id="PRO_0000162509" description="Complement component C8 beta chain">
    <location>
        <begin position="54"/>
        <end position="589"/>
    </location>
</feature>
<feature type="transmembrane region" description="Beta stranded" evidence="1">
    <location>
        <begin position="251"/>
        <end position="258"/>
    </location>
</feature>
<feature type="transmembrane region" description="Beta stranded" evidence="1">
    <location>
        <begin position="261"/>
        <end position="268"/>
    </location>
</feature>
<feature type="transmembrane region" description="Beta stranded" evidence="1">
    <location>
        <begin position="378"/>
        <end position="385"/>
    </location>
</feature>
<feature type="transmembrane region" description="Beta stranded" evidence="1">
    <location>
        <begin position="391"/>
        <end position="398"/>
    </location>
</feature>
<feature type="domain" description="TSP type-1 1" evidence="4">
    <location>
        <begin position="63"/>
        <end position="116"/>
    </location>
</feature>
<feature type="domain" description="LDL-receptor class A" evidence="3">
    <location>
        <begin position="120"/>
        <end position="155"/>
    </location>
</feature>
<feature type="domain" description="MACPF" evidence="5">
    <location>
        <begin position="157"/>
        <end position="503"/>
    </location>
</feature>
<feature type="domain" description="EGF-like">
    <location>
        <begin position="504"/>
        <end position="534"/>
    </location>
</feature>
<feature type="domain" description="TSP type-1 2" evidence="4">
    <location>
        <begin position="544"/>
        <end position="587"/>
    </location>
</feature>
<feature type="region of interest" description="Disordered" evidence="6">
    <location>
        <begin position="556"/>
        <end position="589"/>
    </location>
</feature>
<feature type="binding site" evidence="1">
    <location>
        <position position="137"/>
    </location>
    <ligand>
        <name>Ca(2+)</name>
        <dbReference type="ChEBI" id="CHEBI:29108"/>
    </ligand>
</feature>
<feature type="binding site" evidence="1">
    <location>
        <position position="140"/>
    </location>
    <ligand>
        <name>Ca(2+)</name>
        <dbReference type="ChEBI" id="CHEBI:29108"/>
    </ligand>
</feature>
<feature type="binding site" evidence="1">
    <location>
        <position position="142"/>
    </location>
    <ligand>
        <name>Ca(2+)</name>
        <dbReference type="ChEBI" id="CHEBI:29108"/>
    </ligand>
</feature>
<feature type="binding site" evidence="1">
    <location>
        <position position="144"/>
    </location>
    <ligand>
        <name>Ca(2+)</name>
        <dbReference type="ChEBI" id="CHEBI:29108"/>
    </ligand>
</feature>
<feature type="binding site" evidence="1">
    <location>
        <position position="150"/>
    </location>
    <ligand>
        <name>Ca(2+)</name>
        <dbReference type="ChEBI" id="CHEBI:29108"/>
    </ligand>
</feature>
<feature type="binding site" evidence="1">
    <location>
        <position position="151"/>
    </location>
    <ligand>
        <name>Ca(2+)</name>
        <dbReference type="ChEBI" id="CHEBI:29108"/>
    </ligand>
</feature>
<feature type="modified residue" description="Phosphothreonine" evidence="1">
    <location>
        <position position="417"/>
    </location>
</feature>
<feature type="glycosylation site" description="N-linked (GlcNAc...) asparagine" evidence="2">
    <location>
        <position position="43"/>
    </location>
</feature>
<feature type="glycosylation site" description="C-linked (Man) tryptophan" evidence="1">
    <location>
        <position position="69"/>
    </location>
</feature>
<feature type="glycosylation site" description="C-linked (Man) tryptophan" evidence="1">
    <location>
        <position position="72"/>
    </location>
</feature>
<feature type="glycosylation site" description="N-linked (GlcNAc...) asparagine" evidence="2">
    <location>
        <position position="242"/>
    </location>
</feature>
<feature type="glycosylation site" description="C-linked (Man) tryptophan" evidence="1">
    <location>
        <position position="550"/>
    </location>
</feature>
<feature type="glycosylation site" description="C-linked (Man) tryptophan" evidence="1">
    <location>
        <position position="553"/>
    </location>
</feature>
<feature type="disulfide bond" evidence="1">
    <location>
        <begin position="64"/>
        <end position="99"/>
    </location>
</feature>
<feature type="disulfide bond" evidence="1">
    <location>
        <begin position="75"/>
        <end position="109"/>
    </location>
</feature>
<feature type="disulfide bond" evidence="1">
    <location>
        <begin position="78"/>
        <end position="115"/>
    </location>
</feature>
<feature type="disulfide bond" evidence="1">
    <location>
        <begin position="121"/>
        <end position="132"/>
    </location>
</feature>
<feature type="disulfide bond" evidence="1">
    <location>
        <begin position="126"/>
        <end position="145"/>
    </location>
</feature>
<feature type="disulfide bond" evidence="1">
    <location>
        <begin position="139"/>
        <end position="154"/>
    </location>
</feature>
<feature type="disulfide bond" evidence="1">
    <location>
        <begin position="161"/>
        <end position="199"/>
    </location>
</feature>
<feature type="disulfide bond" evidence="1">
    <location>
        <begin position="377"/>
        <end position="402"/>
    </location>
</feature>
<feature type="disulfide bond" evidence="1">
    <location>
        <begin position="502"/>
        <end position="549"/>
    </location>
</feature>
<feature type="disulfide bond" evidence="1">
    <location>
        <begin position="504"/>
        <end position="520"/>
    </location>
</feature>
<feature type="disulfide bond" evidence="1">
    <location>
        <begin position="507"/>
        <end position="522"/>
    </location>
</feature>
<feature type="disulfide bond" evidence="1">
    <location>
        <begin position="524"/>
        <end position="533"/>
    </location>
</feature>
<feature type="disulfide bond" evidence="1">
    <location>
        <begin position="556"/>
        <end position="589"/>
    </location>
</feature>
<feature type="sequence conflict" description="In Ref. 3; AAA82890." evidence="7" ref="3">
    <original>W</original>
    <variation>R</variation>
    <location>
        <position position="451"/>
    </location>
</feature>
<feature type="sequence conflict" description="In Ref. 3; AAA82890." evidence="7" ref="3">
    <original>N</original>
    <variation>I</variation>
    <location>
        <position position="458"/>
    </location>
</feature>
<feature type="sequence conflict" description="In Ref. 3; AAA82890." evidence="7" ref="3">
    <original>L</original>
    <variation>S</variation>
    <location>
        <position position="464"/>
    </location>
</feature>
<feature type="sequence conflict" description="In Ref. 3; AAA82890." evidence="7" ref="3">
    <original>M</original>
    <variation>K</variation>
    <location>
        <position position="497"/>
    </location>
</feature>
<feature type="sequence conflict" description="In Ref. 3; AAA82890." evidence="7" ref="3">
    <original>AGF</original>
    <variation>VGL</variation>
    <location>
        <begin position="526"/>
        <end position="528"/>
    </location>
</feature>
<feature type="sequence conflict" description="In Ref. 3; AAA82890." evidence="7" ref="3">
    <original>D</original>
    <variation>N</variation>
    <location>
        <position position="588"/>
    </location>
</feature>
<proteinExistence type="evidence at transcript level"/>
<gene>
    <name type="primary">C8b</name>
</gene>
<keyword id="KW-0106">Calcium</keyword>
<keyword id="KW-0179">Complement alternate pathway</keyword>
<keyword id="KW-0180">Complement pathway</keyword>
<keyword id="KW-0204">Cytolysis</keyword>
<keyword id="KW-1015">Disulfide bond</keyword>
<keyword id="KW-0245">EGF-like domain</keyword>
<keyword id="KW-0325">Glycoprotein</keyword>
<keyword id="KW-0391">Immunity</keyword>
<keyword id="KW-0399">Innate immunity</keyword>
<keyword id="KW-0472">Membrane</keyword>
<keyword id="KW-0473">Membrane attack complex</keyword>
<keyword id="KW-0479">Metal-binding</keyword>
<keyword id="KW-0597">Phosphoprotein</keyword>
<keyword id="KW-1185">Reference proteome</keyword>
<keyword id="KW-0677">Repeat</keyword>
<keyword id="KW-0964">Secreted</keyword>
<keyword id="KW-0732">Signal</keyword>
<keyword id="KW-1052">Target cell membrane</keyword>
<keyword id="KW-1053">Target membrane</keyword>
<keyword id="KW-0812">Transmembrane</keyword>
<keyword id="KW-1134">Transmembrane beta strand</keyword>
<evidence type="ECO:0000250" key="1">
    <source>
        <dbReference type="UniProtKB" id="P07358"/>
    </source>
</evidence>
<evidence type="ECO:0000255" key="2"/>
<evidence type="ECO:0000255" key="3">
    <source>
        <dbReference type="PROSITE-ProRule" id="PRU00124"/>
    </source>
</evidence>
<evidence type="ECO:0000255" key="4">
    <source>
        <dbReference type="PROSITE-ProRule" id="PRU00210"/>
    </source>
</evidence>
<evidence type="ECO:0000255" key="5">
    <source>
        <dbReference type="PROSITE-ProRule" id="PRU00745"/>
    </source>
</evidence>
<evidence type="ECO:0000256" key="6">
    <source>
        <dbReference type="SAM" id="MobiDB-lite"/>
    </source>
</evidence>
<evidence type="ECO:0000305" key="7"/>
<dbReference type="EMBL" id="AABR03041555">
    <property type="status" value="NOT_ANNOTATED_CDS"/>
    <property type="molecule type" value="Genomic_DNA"/>
</dbReference>
<dbReference type="EMBL" id="AABR03042213">
    <property type="status" value="NOT_ANNOTATED_CDS"/>
    <property type="molecule type" value="Genomic_DNA"/>
</dbReference>
<dbReference type="EMBL" id="CO561829">
    <property type="status" value="NOT_ANNOTATED_CDS"/>
    <property type="molecule type" value="mRNA"/>
</dbReference>
<dbReference type="EMBL" id="BC090023">
    <property type="protein sequence ID" value="AAH90023.1"/>
    <property type="molecule type" value="mRNA"/>
</dbReference>
<dbReference type="EMBL" id="U20194">
    <property type="protein sequence ID" value="AAA82890.1"/>
    <property type="molecule type" value="mRNA"/>
</dbReference>
<dbReference type="RefSeq" id="NP_001178688.1">
    <property type="nucleotide sequence ID" value="NM_001191759.1"/>
</dbReference>
<dbReference type="RefSeq" id="XP_006238557.1">
    <property type="nucleotide sequence ID" value="XM_006238495.3"/>
</dbReference>
<dbReference type="SMR" id="P55314"/>
<dbReference type="FunCoup" id="P55314">
    <property type="interactions" value="54"/>
</dbReference>
<dbReference type="STRING" id="10116.ENSRNOP00000010100"/>
<dbReference type="GlyCosmos" id="P55314">
    <property type="glycosylation" value="6 sites, No reported glycans"/>
</dbReference>
<dbReference type="GlyGen" id="P55314">
    <property type="glycosylation" value="6 sites"/>
</dbReference>
<dbReference type="PhosphoSitePlus" id="P55314"/>
<dbReference type="PaxDb" id="10116-ENSRNOP00000010100"/>
<dbReference type="Ensembl" id="ENSRNOT00000010100.8">
    <property type="protein sequence ID" value="ENSRNOP00000010100.5"/>
    <property type="gene ID" value="ENSRNOG00000007639.8"/>
</dbReference>
<dbReference type="GeneID" id="313421"/>
<dbReference type="KEGG" id="rno:313421"/>
<dbReference type="UCSC" id="RGD:2239">
    <property type="organism name" value="rat"/>
</dbReference>
<dbReference type="AGR" id="RGD:2239"/>
<dbReference type="CTD" id="732"/>
<dbReference type="RGD" id="2239">
    <property type="gene designation" value="C8b"/>
</dbReference>
<dbReference type="eggNOG" id="KOG3535">
    <property type="taxonomic scope" value="Eukaryota"/>
</dbReference>
<dbReference type="GeneTree" id="ENSGT00940000160247"/>
<dbReference type="HOGENOM" id="CLU_032453_1_0_1"/>
<dbReference type="InParanoid" id="P55314"/>
<dbReference type="OMA" id="KYYAGAC"/>
<dbReference type="OrthoDB" id="32106at9989"/>
<dbReference type="PhylomeDB" id="P55314"/>
<dbReference type="TreeFam" id="TF330498"/>
<dbReference type="PRO" id="PR:P55314"/>
<dbReference type="Proteomes" id="UP000002494">
    <property type="component" value="Chromosome 5"/>
</dbReference>
<dbReference type="Bgee" id="ENSRNOG00000007639">
    <property type="expression patterns" value="Expressed in liver and 2 other cell types or tissues"/>
</dbReference>
<dbReference type="GO" id="GO:0005576">
    <property type="term" value="C:extracellular region"/>
    <property type="evidence" value="ECO:0000314"/>
    <property type="project" value="RGD"/>
</dbReference>
<dbReference type="GO" id="GO:0005615">
    <property type="term" value="C:extracellular space"/>
    <property type="evidence" value="ECO:0000314"/>
    <property type="project" value="RGD"/>
</dbReference>
<dbReference type="GO" id="GO:0005579">
    <property type="term" value="C:membrane attack complex"/>
    <property type="evidence" value="ECO:0000266"/>
    <property type="project" value="RGD"/>
</dbReference>
<dbReference type="GO" id="GO:0044877">
    <property type="term" value="F:protein-containing complex binding"/>
    <property type="evidence" value="ECO:0000353"/>
    <property type="project" value="RGD"/>
</dbReference>
<dbReference type="GO" id="GO:0006956">
    <property type="term" value="P:complement activation"/>
    <property type="evidence" value="ECO:0000318"/>
    <property type="project" value="GO_Central"/>
</dbReference>
<dbReference type="GO" id="GO:0006957">
    <property type="term" value="P:complement activation, alternative pathway"/>
    <property type="evidence" value="ECO:0007669"/>
    <property type="project" value="UniProtKB-KW"/>
</dbReference>
<dbReference type="GO" id="GO:0006958">
    <property type="term" value="P:complement activation, classical pathway"/>
    <property type="evidence" value="ECO:0007669"/>
    <property type="project" value="UniProtKB-KW"/>
</dbReference>
<dbReference type="GO" id="GO:0031640">
    <property type="term" value="P:killing of cells of another organism"/>
    <property type="evidence" value="ECO:0007669"/>
    <property type="project" value="UniProtKB-KW"/>
</dbReference>
<dbReference type="CDD" id="cd00112">
    <property type="entry name" value="LDLa"/>
    <property type="match status" value="1"/>
</dbReference>
<dbReference type="FunFam" id="2.20.100.10:FF:000082">
    <property type="entry name" value="Complement component C8 beta chain"/>
    <property type="match status" value="1"/>
</dbReference>
<dbReference type="FunFam" id="4.10.400.10:FF:000069">
    <property type="entry name" value="complement component C8 beta chain"/>
    <property type="match status" value="1"/>
</dbReference>
<dbReference type="FunFam" id="2.20.100.10:FF:000001">
    <property type="entry name" value="semaphorin-5A isoform X1"/>
    <property type="match status" value="1"/>
</dbReference>
<dbReference type="Gene3D" id="2.10.25.10">
    <property type="entry name" value="Laminin"/>
    <property type="match status" value="1"/>
</dbReference>
<dbReference type="Gene3D" id="4.10.400.10">
    <property type="entry name" value="Low-density Lipoprotein Receptor"/>
    <property type="match status" value="1"/>
</dbReference>
<dbReference type="Gene3D" id="2.20.100.10">
    <property type="entry name" value="Thrombospondin type-1 (TSP1) repeat"/>
    <property type="match status" value="2"/>
</dbReference>
<dbReference type="InterPro" id="IPR048831">
    <property type="entry name" value="C8A_B_C6_EGF-like"/>
</dbReference>
<dbReference type="InterPro" id="IPR000742">
    <property type="entry name" value="EGF-like_dom"/>
</dbReference>
<dbReference type="InterPro" id="IPR036055">
    <property type="entry name" value="LDL_receptor-like_sf"/>
</dbReference>
<dbReference type="InterPro" id="IPR023415">
    <property type="entry name" value="LDLR_class-A_CS"/>
</dbReference>
<dbReference type="InterPro" id="IPR002172">
    <property type="entry name" value="LDrepeatLR_classA_rpt"/>
</dbReference>
<dbReference type="InterPro" id="IPR001862">
    <property type="entry name" value="MAC_perforin"/>
</dbReference>
<dbReference type="InterPro" id="IPR020864">
    <property type="entry name" value="MACPF"/>
</dbReference>
<dbReference type="InterPro" id="IPR020863">
    <property type="entry name" value="MACPF_CS"/>
</dbReference>
<dbReference type="InterPro" id="IPR000884">
    <property type="entry name" value="TSP1_rpt"/>
</dbReference>
<dbReference type="InterPro" id="IPR036383">
    <property type="entry name" value="TSP1_rpt_sf"/>
</dbReference>
<dbReference type="PANTHER" id="PTHR45742">
    <property type="entry name" value="COMPLEMENT COMPONENT C6"/>
    <property type="match status" value="1"/>
</dbReference>
<dbReference type="PANTHER" id="PTHR45742:SF5">
    <property type="entry name" value="COMPLEMENT COMPONENT C8 BETA CHAIN"/>
    <property type="match status" value="1"/>
</dbReference>
<dbReference type="Pfam" id="PF21195">
    <property type="entry name" value="EGF_C8A_B_C6"/>
    <property type="match status" value="1"/>
</dbReference>
<dbReference type="Pfam" id="PF00057">
    <property type="entry name" value="Ldl_recept_a"/>
    <property type="match status" value="1"/>
</dbReference>
<dbReference type="Pfam" id="PF01823">
    <property type="entry name" value="MACPF"/>
    <property type="match status" value="1"/>
</dbReference>
<dbReference type="Pfam" id="PF00090">
    <property type="entry name" value="TSP_1"/>
    <property type="match status" value="2"/>
</dbReference>
<dbReference type="PRINTS" id="PR00764">
    <property type="entry name" value="COMPLEMENTC9"/>
</dbReference>
<dbReference type="PRINTS" id="PR01705">
    <property type="entry name" value="TSP1REPEAT"/>
</dbReference>
<dbReference type="SMART" id="SM00192">
    <property type="entry name" value="LDLa"/>
    <property type="match status" value="1"/>
</dbReference>
<dbReference type="SMART" id="SM00457">
    <property type="entry name" value="MACPF"/>
    <property type="match status" value="1"/>
</dbReference>
<dbReference type="SMART" id="SM00209">
    <property type="entry name" value="TSP1"/>
    <property type="match status" value="2"/>
</dbReference>
<dbReference type="SUPFAM" id="SSF57196">
    <property type="entry name" value="EGF/Laminin"/>
    <property type="match status" value="1"/>
</dbReference>
<dbReference type="SUPFAM" id="SSF57424">
    <property type="entry name" value="LDL receptor-like module"/>
    <property type="match status" value="1"/>
</dbReference>
<dbReference type="SUPFAM" id="SSF82895">
    <property type="entry name" value="TSP-1 type 1 repeat"/>
    <property type="match status" value="2"/>
</dbReference>
<dbReference type="PROSITE" id="PS00022">
    <property type="entry name" value="EGF_1"/>
    <property type="match status" value="1"/>
</dbReference>
<dbReference type="PROSITE" id="PS01186">
    <property type="entry name" value="EGF_2"/>
    <property type="match status" value="1"/>
</dbReference>
<dbReference type="PROSITE" id="PS01209">
    <property type="entry name" value="LDLRA_1"/>
    <property type="match status" value="1"/>
</dbReference>
<dbReference type="PROSITE" id="PS50068">
    <property type="entry name" value="LDLRA_2"/>
    <property type="match status" value="1"/>
</dbReference>
<dbReference type="PROSITE" id="PS00279">
    <property type="entry name" value="MACPF_1"/>
    <property type="match status" value="1"/>
</dbReference>
<dbReference type="PROSITE" id="PS51412">
    <property type="entry name" value="MACPF_2"/>
    <property type="match status" value="1"/>
</dbReference>
<dbReference type="PROSITE" id="PS50092">
    <property type="entry name" value="TSP1"/>
    <property type="match status" value="2"/>
</dbReference>
<comment type="function">
    <text evidence="1">Component of the membrane attack complex (MAC), a multiprotein complex activated by the complement cascade, which inserts into a target cell membrane and forms a pore, leading to target cell membrane rupture and cell lysis. The MAC is initiated by proteolytic cleavage of C5 into complement C5b in response to the classical, alternative, lectin and GZMK complement pathways. The complement pathways consist in a cascade of proteins that leads to phagocytosis and breakdown of pathogens and signaling that strengthens the adaptive immune system. C8B, together with C8A and C8G, inserts into the target membrane, but does not form pores by itself. During MAC assembly, associates with C5b, C6 and C7 to form the C5b8 intermediate complex that inserts into the target membrane and traverses the bilayer increasing membrane rigidity.</text>
</comment>
<comment type="activity regulation">
    <text evidence="1">Membrane attack complex (MAC) assembly is inhibited by CD59, thereby protecting self-cells from damage during complement activation. CD59 acts by binding to the beta-haipins of C8 (C8A and C8B), forming an intermolecular beta-sheet that prevents incorporation of the multiple copies of C9 required for complete formation of the osmolytic pore. MAC assembly is also inhibited by clusterin (CLU) chaperones that inhibit polymerization of C9.</text>
</comment>
<comment type="subunit">
    <text evidence="1">Heterotrimer of 3 chains: alpha (C8A), beta (C8B) and gamma (C8G); the alpha and gamma chains are disulfide bonded. Component of the membrane attack complex (MAC), composed of complement C5b, C6, C7, C8A, C8B, C8G and multiple copies of the pore-forming subunit C9.</text>
</comment>
<comment type="subcellular location">
    <subcellularLocation>
        <location evidence="1">Secreted</location>
    </subcellularLocation>
    <subcellularLocation>
        <location evidence="1">Target cell membrane</location>
        <topology evidence="1">Multi-pass membrane protein</topology>
    </subcellularLocation>
    <text evidence="1">Secreted as soluble protein. Inserts into the cell membrane of target cells.</text>
</comment>
<comment type="PTM">
    <text evidence="1">N-glycosylated; contains one or two bound glycans. Not O-glycosylated.</text>
</comment>
<comment type="similarity">
    <text evidence="7">Belongs to the complement C6/C7/C8/C9 family.</text>
</comment>
<comment type="sequence caution" evidence="7">
    <conflict type="frameshift">
        <sequence resource="EMBL" id="CO561829"/>
    </conflict>
</comment>
<accession>P55314</accession>
<accession>Q5EB58</accession>
<sequence>MKTGAQVWRALAKSCLLCAALGCLHLPGARGEKPDFFETNAVNGSLVRSRPVRSVDVTPAPTDCQLSTWSSWTACDPCQKKRYRHTYLLRPSQFYGELCDFSDKEVEDCVTNRACRSQVRCEGFVCAQTGRCVNRRLLCNGDNDCGDQSDEANCRRIYKKCSQDMEQYWAIGNLASGINLFTNTFEGPVLDHRYYAGACSPHYILNTNFRKPYNVESYTPQTQGKYEFALTEYESYFDFEHNVTEKATSKSSFKFGFKLDGLVEFGVRKESNEGRHYISRTKRFSHTKSKFLHARSVLEVAHYKLKSRQLMLHYEFLQRVKSLPLEYSYGEYRDLLRDFGTHFITEAVLGGIYEYTLIMNKDAMERGDYTLDHVSACAGGGFQIGGNVYKVYLKLGVSEKKCSDILNEIKDRNKRRTMVEDLVVLVRGGTSEYITSLAYKDLPTAELMKEWGDAVQYNPAIIKLKAEPLYELVTATDFAYSSTVKQNMKKALEEFQMEVSSCRCAPCRNNGVPILKESRCECICPAGFQGVACEVTNRKDIPIDGKWSCWSDWSPCSGGRKTRQRQCNNPAPQRGGSPCSGPASETLDC</sequence>